<name>BAF_HUMAN</name>
<keyword id="KW-0002">3D-structure</keyword>
<keyword id="KW-0007">Acetylation</keyword>
<keyword id="KW-0158">Chromosome</keyword>
<keyword id="KW-0963">Cytoplasm</keyword>
<keyword id="KW-0225">Disease variant</keyword>
<keyword id="KW-0238">DNA-binding</keyword>
<keyword id="KW-0945">Host-virus interaction</keyword>
<keyword id="KW-0539">Nucleus</keyword>
<keyword id="KW-1285">Osteoporosis</keyword>
<keyword id="KW-0597">Phosphoprotein</keyword>
<keyword id="KW-1267">Proteomics identification</keyword>
<keyword id="KW-1185">Reference proteome</keyword>
<comment type="function">
    <text evidence="1 4 5 14 19 20 21 23 24">Non-specific DNA-binding protein that plays key roles in mitotic nuclear reassembly, chromatin organization, DNA damage response, gene expression and intrinsic immunity against foreign DNA (PubMed:10908652, PubMed:11792822, PubMed:12163470, PubMed:18005698, PubMed:25991860, PubMed:28841419, PubMed:31796734, PubMed:32792394). Contains two non-specific double-stranded DNA (dsDNA)-binding sites which promote DNA cross-bridging (PubMed:9465049). Plays a key role in nuclear membrane reformation at the end of mitosis by driving formation of a single nucleus in a spindle-independent manner (PubMed:28841419). Transiently cross-bridges anaphase chromosomes via its ability to bridge distant DNA sites, leading to the formation of a dense chromatin network at the chromosome ensemble surface that limits membranes to the surface (PubMed:28841419). Also acts as a negative regulator of innate immune activation by restricting CGAS activity toward self-DNA upon acute loss of nuclear membrane integrity (PubMed:32792394). Outcompetes CGAS for DNA-binding, thereby preventing CGAS activation and subsequent damaging autoinflammatory responses (PubMed:32792394). Also involved in DNA damage response: interacts with PARP1 in response to oxidative stress, thereby inhibiting the ADP-ribosyltransferase activity of PARP1 (PubMed:31796734). Involved in the recognition of exogenous dsDNA in the cytosol: associates with exogenous dsDNA immediately after its appearance in the cytosol at endosome breakdown and is required to avoid autophagy (PubMed:25991860). In case of poxvirus infection, has an antiviral activity by blocking viral DNA replication (PubMed:18005698).</text>
</comment>
<comment type="function">
    <text evidence="3 13 24">(Microbial infection) Exploited by retroviruses for inhibiting self-destructing autointegration of retroviral DNA, thereby promoting integration of viral DNA into the host chromosome (PubMed:11005805, PubMed:16680152, PubMed:9465049). EMD and BAF are cooperative cofactors of HIV-1 infection (PubMed:16680152). Association of EMD with the viral DNA requires the presence of BAF and viral integrase (PubMed:16680152). The association of viral DNA with chromatin requires the presence of BAF and EMD (PubMed:16680152).</text>
</comment>
<comment type="subunit">
    <text evidence="4 8 9 10 16 17 20 21 22">Homodimer (PubMed:16337940, PubMed:22399800, PubMed:28841419). Heterodimerizes with BANF2 (PubMed:16337940). Interacts with ANKLE2/LEM4, leading to decreased phosphorylation by VRK1 and promoting dephosphorylation by protein phosphatase 2A (PP2A) (PubMed:22770216). Binds non-specifically to double-stranded DNA, and is found as a hexamer or dodecamer upon DNA binding. Binds to LEM domain-containing nuclear proteins such as LEMD3/MAN1, TMPO/LAP2 and EMD (emerin) (PubMed:11792822, PubMed:15681850). Interacts with ANKLE1 (via LEM domain); the interaction may favor BANF1 dimerization (PubMed:22399800). Interacts with CRX and LMNA (lamin-A). Binds linker histone H1.1 and core histones H3 (PubMed:16203725). Interacts with LEMD2 (via LEM domain) (PubMed:32494070). Interacts with PARP1; interaction takes place in response to oxidative DNA damage (PubMed:31796734).</text>
</comment>
<comment type="subunit">
    <text evidence="6 7">(Microbial infection) Interacts with HIV-1 pre-integration complex in cytoplasm by binding to viral matrix protein and Gag polyprotein.</text>
</comment>
<comment type="interaction">
    <interactant intactId="EBI-1055977">
        <id>O75531</id>
    </interactant>
    <interactant intactId="EBI-27052251">
        <id>Q8NAG6-2</id>
        <label>ANKLE1</label>
    </interactant>
    <organismsDiffer>false</organismsDiffer>
    <experiments>2</experiments>
</comment>
<comment type="interaction">
    <interactant intactId="EBI-1055977">
        <id>O75531</id>
    </interactant>
    <interactant intactId="EBI-1055977">
        <id>O75531</id>
        <label>BANF1</label>
    </interactant>
    <organismsDiffer>false</organismsDiffer>
    <experiments>3</experiments>
</comment>
<comment type="interaction">
    <interactant intactId="EBI-1055977">
        <id>O75531</id>
    </interactant>
    <interactant intactId="EBI-11977289">
        <id>Q9H503-2</id>
        <label>BANF2</label>
    </interactant>
    <organismsDiffer>false</organismsDiffer>
    <experiments>3</experiments>
</comment>
<comment type="interaction">
    <interactant intactId="EBI-1055977">
        <id>O75531</id>
    </interactant>
    <interactant intactId="EBI-489887">
        <id>P50402</id>
        <label>EMD</label>
    </interactant>
    <organismsDiffer>false</organismsDiffer>
    <experiments>13</experiments>
</comment>
<comment type="interaction">
    <interactant intactId="EBI-1055977">
        <id>O75531</id>
    </interactant>
    <interactant intactId="EBI-73886">
        <id>Q04206</id>
        <label>RELA</label>
    </interactant>
    <organismsDiffer>false</organismsDiffer>
    <experiments>3</experiments>
</comment>
<comment type="interaction">
    <interactant intactId="EBI-1055977">
        <id>O75531</id>
    </interactant>
    <interactant intactId="EBI-11792261">
        <id>Q6UXZ0</id>
        <label>TMIGD1</label>
    </interactant>
    <organismsDiffer>false</organismsDiffer>
    <experiments>7</experiments>
</comment>
<comment type="subcellular location">
    <subcellularLocation>
        <location evidence="12 14 18">Nucleus</location>
    </subcellularLocation>
    <subcellularLocation>
        <location evidence="12 20 21 23">Chromosome</location>
    </subcellularLocation>
    <subcellularLocation>
        <location evidence="18">Nucleus envelope</location>
    </subcellularLocation>
    <subcellularLocation>
        <location evidence="12 14 18">Cytoplasm</location>
    </subcellularLocation>
    <text evidence="7 12 18">Significantly enriched at the nuclear inner membrane, diffusely throughout the nucleus during interphase and concentrated at the chromosomes during the M-phase (PubMed:16495336, PubMed:24600006). The phosphorylated form (by VRK1) shows a cytoplasmic localization whereas the unphosphorylated form locates almost exclusively in the nucleus (PubMed:16495336, PubMed:24600006). May be included in HIV-1 virions via its interaction with viral GAG polyprotein (PubMed:14645565).</text>
</comment>
<comment type="tissue specificity">
    <text evidence="25">Widely expressed. Expressed in colon, brain, heart, kidney, liver, lung, ovary, pancreas, placenta, prostate, skeletal muscle, small intestine, spleen and testis. Not detected in thymus and peripheral blood leukocytes.</text>
</comment>
<comment type="domain">
    <text evidence="2">Has a helix-hairpin-helix (HhH) structural motif conserved among proteins that bind non-specifically to DNA.</text>
</comment>
<comment type="domain">
    <text evidence="8">LEM domain proteins bind centrally on the BAF dimer.</text>
</comment>
<comment type="PTM">
    <text evidence="11 12 17">Ser-4 is the major site of phosphorylation as compared to Thr-2 and Thr-3. Phosphorylation on Thr-2; Thr-3 and Ser-4 disrupts its ability to bind DNA and reduces its ability to bind LEM domain-containing proteins. Non phosphorylated BAF seems to enhance binding between EMD and LMNA. Dephosphorylated by protein phosphatase 2A (PP2A) following interaction with ANKLE2/LEM4 during mitotic exit, leading to mitotic nuclear envelope reassembly.</text>
</comment>
<comment type="PTM">
    <text evidence="14 18">(Microbial infection) Phosphorylated by poxvirus B1 kinase (VPK1) on serine and threonine residues, leading to BANF1 relocalization to the cytoplasm, loss of dimerization and impaired DNA binding activity.</text>
</comment>
<comment type="PTM">
    <text evidence="12 18">(Microbial infection) Phosphorylated at the N-terminus by vaccinia virus (VacV) B1 kinase, leading to BANF1 relocalization to the cytoplasm, loss of dimerization and impaired DNA binding activity (PubMed:16495336, PubMed:24600006). Hyperphosphorylation is linked to the loss of ability to suppress vaccinia virus replication (PubMed:24600006).</text>
</comment>
<comment type="disease" evidence="15">
    <disease id="DI-03175">
        <name>Nestor-Guillermo progeria syndrome</name>
        <acronym>NGPS</acronym>
        <description>An atypical progeroid syndrome characterized by normal development in the first years of life, later followed by the emergence of generalized lipoatrophy, severe osteoporosis, and marked osteolysis. The atrophic facial subcutaneous fat pad and the marked osteolysis of the maxilla and mandible result in a typical pseudosenile facial appearance with micrognathia, prominent subcutaneous venous patterning, a convex nasal ridge, and proptosis. Cognitive development is completely normal. Patients do not have cardiovascular dysfunction, atherosclerosis, or metabolic anomalies.</description>
        <dbReference type="MIM" id="614008"/>
    </disease>
    <text>The disease is caused by variants affecting the gene represented in this entry.</text>
</comment>
<comment type="similarity">
    <text evidence="29">Belongs to the BAF family.</text>
</comment>
<comment type="sequence caution" evidence="29">
    <conflict type="frameshift">
        <sequence resource="EMBL-CDS" id="AAC08964"/>
    </conflict>
</comment>
<protein>
    <recommendedName>
        <fullName evidence="27">Barrier-to-autointegration factor</fullName>
    </recommendedName>
    <alternativeName>
        <fullName evidence="28">Breakpoint cluster region protein 1</fullName>
    </alternativeName>
    <component>
        <recommendedName>
            <fullName evidence="29">Barrier-to-autointegration factor, N-terminally processed</fullName>
        </recommendedName>
    </component>
</protein>
<organism>
    <name type="scientific">Homo sapiens</name>
    <name type="common">Human</name>
    <dbReference type="NCBI Taxonomy" id="9606"/>
    <lineage>
        <taxon>Eukaryota</taxon>
        <taxon>Metazoa</taxon>
        <taxon>Chordata</taxon>
        <taxon>Craniata</taxon>
        <taxon>Vertebrata</taxon>
        <taxon>Euteleostomi</taxon>
        <taxon>Mammalia</taxon>
        <taxon>Eutheria</taxon>
        <taxon>Euarchontoglires</taxon>
        <taxon>Primates</taxon>
        <taxon>Haplorrhini</taxon>
        <taxon>Catarrhini</taxon>
        <taxon>Hominidae</taxon>
        <taxon>Homo</taxon>
    </lineage>
</organism>
<evidence type="ECO:0000269" key="1">
    <source>
    </source>
</evidence>
<evidence type="ECO:0000269" key="2">
    <source>
    </source>
</evidence>
<evidence type="ECO:0000269" key="3">
    <source>
    </source>
</evidence>
<evidence type="ECO:0000269" key="4">
    <source>
    </source>
</evidence>
<evidence type="ECO:0000269" key="5">
    <source>
    </source>
</evidence>
<evidence type="ECO:0000269" key="6">
    <source>
    </source>
</evidence>
<evidence type="ECO:0000269" key="7">
    <source>
    </source>
</evidence>
<evidence type="ECO:0000269" key="8">
    <source>
    </source>
</evidence>
<evidence type="ECO:0000269" key="9">
    <source>
    </source>
</evidence>
<evidence type="ECO:0000269" key="10">
    <source>
    </source>
</evidence>
<evidence type="ECO:0000269" key="11">
    <source>
    </source>
</evidence>
<evidence type="ECO:0000269" key="12">
    <source>
    </source>
</evidence>
<evidence type="ECO:0000269" key="13">
    <source>
    </source>
</evidence>
<evidence type="ECO:0000269" key="14">
    <source>
    </source>
</evidence>
<evidence type="ECO:0000269" key="15">
    <source>
    </source>
</evidence>
<evidence type="ECO:0000269" key="16">
    <source>
    </source>
</evidence>
<evidence type="ECO:0000269" key="17">
    <source>
    </source>
</evidence>
<evidence type="ECO:0000269" key="18">
    <source>
    </source>
</evidence>
<evidence type="ECO:0000269" key="19">
    <source>
    </source>
</evidence>
<evidence type="ECO:0000269" key="20">
    <source>
    </source>
</evidence>
<evidence type="ECO:0000269" key="21">
    <source>
    </source>
</evidence>
<evidence type="ECO:0000269" key="22">
    <source>
    </source>
</evidence>
<evidence type="ECO:0000269" key="23">
    <source>
    </source>
</evidence>
<evidence type="ECO:0000269" key="24">
    <source>
    </source>
</evidence>
<evidence type="ECO:0000269" key="25">
    <source>
    </source>
</evidence>
<evidence type="ECO:0000303" key="26">
    <source>
    </source>
</evidence>
<evidence type="ECO:0000303" key="27">
    <source>
    </source>
</evidence>
<evidence type="ECO:0000303" key="28">
    <source>
    </source>
</evidence>
<evidence type="ECO:0000305" key="29"/>
<evidence type="ECO:0000312" key="30">
    <source>
        <dbReference type="HGNC" id="HGNC:17397"/>
    </source>
</evidence>
<evidence type="ECO:0007744" key="31">
    <source>
    </source>
</evidence>
<evidence type="ECO:0007744" key="32">
    <source>
    </source>
</evidence>
<evidence type="ECO:0007829" key="33">
    <source>
        <dbReference type="PDB" id="7NDY"/>
    </source>
</evidence>
<proteinExistence type="evidence at protein level"/>
<feature type="chain" id="PRO_0000423190" description="Barrier-to-autointegration factor">
    <location>
        <begin position="1"/>
        <end position="89"/>
    </location>
</feature>
<feature type="initiator methionine" description="Removed; alternate" evidence="31">
    <location>
        <position position="1"/>
    </location>
</feature>
<feature type="chain" id="PRO_0000221026" description="Barrier-to-autointegration factor, N-terminally processed">
    <location>
        <begin position="2"/>
        <end position="89"/>
    </location>
</feature>
<feature type="domain" description="HhH" evidence="2">
    <location>
        <begin position="20"/>
        <end position="35"/>
    </location>
</feature>
<feature type="modified residue" description="N-acetylmethionine" evidence="32">
    <location>
        <position position="1"/>
    </location>
</feature>
<feature type="modified residue" description="(Microbial infection) Phosphothreonine; by viral VacV B1 kinase" evidence="12">
    <location>
        <position position="2"/>
    </location>
</feature>
<feature type="modified residue" description="N-acetylthreonine; in Barrier-to-autointegration factor, N-terminally processed" evidence="31">
    <location>
        <position position="2"/>
    </location>
</feature>
<feature type="modified residue" description="Phosphothreonine; by VRK1 and VRK2" evidence="12">
    <location>
        <position position="2"/>
    </location>
</feature>
<feature type="modified residue" description="(Microbial infection) Phosphothreonine; by viral VacV B1 kinase" evidence="12">
    <location>
        <position position="3"/>
    </location>
</feature>
<feature type="modified residue" description="Phosphothreonine; by VRK1 and VRK2" evidence="12">
    <location>
        <position position="3"/>
    </location>
</feature>
<feature type="modified residue" description="Phosphoserine; by viral VacV B1 kinase, VRK1 and VRK2" evidence="11 12">
    <location>
        <position position="4"/>
    </location>
</feature>
<feature type="sequence variant" id="VAR_065954" description="In NGPS; shows a dramatic reduction in BANF1 protein levels indicating that the mutation impairs protein stability; dbSNP:rs387906871." evidence="15">
    <original>A</original>
    <variation>T</variation>
    <location>
        <position position="12"/>
    </location>
</feature>
<feature type="mutagenesis site" description="95% nuclear localization. Loss of BAF phosphorylation and ability to suppress vaccinia virus DNA replication." evidence="12 18">
    <original>TTS</original>
    <variation>AAA</variation>
    <location>
        <begin position="2"/>
        <end position="4"/>
    </location>
</feature>
<feature type="mutagenesis site" description="85% cytoplasmic localization." evidence="18">
    <original>TTS</original>
    <variation>DDD</variation>
    <location>
        <begin position="2"/>
        <end position="4"/>
    </location>
</feature>
<feature type="mutagenesis site" description="No effect on the initial rate of phosphorylation but a second slow phase of phosphorylation is absent." evidence="12">
    <original>TT</original>
    <variation>AA</variation>
    <location>
        <begin position="2"/>
        <end position="3"/>
    </location>
</feature>
<feature type="mutagenesis site" description="Delayed phosphorylation with a 10-fold decrease in the initial phosphorylation rate. 71% loss of binding to lamin A." evidence="11 12">
    <original>S</original>
    <variation>A</variation>
    <location>
        <position position="4"/>
    </location>
</feature>
<feature type="mutagenesis site" description="75% cytoplasmic localization." evidence="18">
    <original>S</original>
    <variation>D</variation>
    <location>
        <position position="4"/>
    </location>
</feature>
<feature type="mutagenesis site" description="Complete loss of phosphorylation and mislocalization of EMD in nucleus." evidence="11">
    <original>S</original>
    <variation>E</variation>
    <location>
        <position position="4"/>
    </location>
</feature>
<feature type="mutagenesis site" description="Complete loss of LEMD3/MAN1 and histone H1/H3 binding." evidence="3 5 8 9">
    <original>K</original>
    <variation>A</variation>
    <location>
        <position position="6"/>
    </location>
</feature>
<feature type="mutagenesis site" description="Complete loss of dsDNA and LEMD3/MAN1 binding." evidence="3 5 8 9">
    <original>K</original>
    <variation>E</variation>
    <location>
        <position position="6"/>
    </location>
</feature>
<feature type="mutagenesis site" description="Enhances histone H1/H3 binding." evidence="8 9">
    <original>R</original>
    <variation>A</variation>
    <location>
        <position position="8"/>
    </location>
</feature>
<feature type="mutagenesis site" description="Complete loss of LEMD3/MAN1 binding." evidence="8 9">
    <original>R</original>
    <variation>E</variation>
    <location>
        <position position="8"/>
    </location>
</feature>
<feature type="mutagenesis site" description="Reduces binding to dsDNA, LEMD3/MAN1 and histone H1/H3. Reduced interaction with PARP1." evidence="5 8 9 21">
    <original>D</original>
    <variation>A</variation>
    <location>
        <position position="9"/>
    </location>
</feature>
<feature type="mutagenesis site" description="No effect on LEMD3/MAN1 and enhances histone H1/H3 binding." evidence="3 8 9">
    <original>P</original>
    <variation>A</variation>
    <location>
        <position position="14"/>
    </location>
</feature>
<feature type="mutagenesis site" description="No effect on histone H1/H3 binding." evidence="3 9">
    <original>K</original>
    <variation>A</variation>
    <location>
        <position position="18"/>
    </location>
</feature>
<feature type="mutagenesis site" description="Complete loss of dsDNA, EMD, histone H1/H3 and LEMD3/MAN1 binding." evidence="5 8 9">
    <original>G</original>
    <variation>E</variation>
    <location>
        <position position="25"/>
    </location>
</feature>
<feature type="mutagenesis site" description="Complete loss of EMD binding and reduces dsDNA binding." evidence="5 8 9">
    <original>G</original>
    <variation>Q</variation>
    <location>
        <position position="25"/>
    </location>
</feature>
<feature type="mutagenesis site" description="Reduces histone H1/H3 and LEMD3/MAN1 binding. Fails to promote HIV-1 genome integration." evidence="3 8 9">
    <original>I</original>
    <variation>A</variation>
    <location>
        <position position="26"/>
    </location>
</feature>
<feature type="mutagenesis site" description="Fails to promote HIV-1 genome integration." evidence="3 8 9">
    <original>I</original>
    <variation>K</variation>
    <location>
        <position position="26"/>
    </location>
</feature>
<feature type="mutagenesis site" description="Fails to bind dsDNA." evidence="5">
    <original>G</original>
    <variation>E</variation>
    <location>
        <position position="27"/>
    </location>
</feature>
<feature type="mutagenesis site" description="Reduces binding to dsDNA." evidence="5">
    <original>G</original>
    <variation>Q</variation>
    <location>
        <position position="27"/>
    </location>
</feature>
<feature type="mutagenesis site" description="No effect on histone H1/H3 binding." evidence="9">
    <original>V</original>
    <variation>A</variation>
    <location>
        <position position="29"/>
    </location>
</feature>
<feature type="mutagenesis site" description="No effect on histone H1/H3 binding." evidence="9">
    <original>K</original>
    <variation>E</variation>
    <location>
        <position position="32"/>
    </location>
</feature>
<feature type="mutagenesis site" description="No effect on histone H1/H3 binding." evidence="9">
    <original>K</original>
    <variation>E</variation>
    <location>
        <position position="33"/>
    </location>
</feature>
<feature type="mutagenesis site" description="No effect on histone H1/H3 binding." evidence="8 9">
    <original>R</original>
    <variation>A</variation>
    <location>
        <position position="37"/>
    </location>
</feature>
<feature type="mutagenesis site" description="Reduces LEMD3/MAN1 binding." evidence="8 9">
    <original>R</original>
    <variation>E</variation>
    <location>
        <position position="37"/>
    </location>
</feature>
<feature type="mutagenesis site" description="No effect on histone H1/H3 and LEMD3/MAN1 binding." evidence="3 8 9">
    <original>K</original>
    <variation>A</variation>
    <location>
        <position position="41"/>
    </location>
</feature>
<feature type="mutagenesis site" description="Reduces histone H1/H3 binding." evidence="3 8 9">
    <original>K</original>
    <variation>E</variation>
    <location>
        <position position="41"/>
    </location>
</feature>
<feature type="mutagenesis site" description="Complete loss of dsDNA, histone H1/H3 and LEMD3/MAN1 binding." evidence="5 8 9">
    <original>L</original>
    <variation>E</variation>
    <location>
        <position position="46"/>
    </location>
</feature>
<feature type="mutagenesis site" description="Abolishes homodimerization, preventing ability to cross-bridge DNA. Abolished ability to mediate nuclear membrane reformation at the end of mitosis. Abolished ability to outcompete CGAS for DNA-binding, leading to innate immune activation. Complete loss of EMD, histone H1/H3 and LEMD3/MAN1 binding." evidence="5 8 9 20 23">
    <original>G</original>
    <variation>E</variation>
    <location>
        <position position="47"/>
    </location>
</feature>
<feature type="mutagenesis site" description="Reduces LEMD3/MAN1 binding. No effect on Histone H1/H3 binding." evidence="3 8 9">
    <original>L</original>
    <variation>A</variation>
    <location>
        <position position="50"/>
    </location>
</feature>
<feature type="mutagenesis site" description="Fails to promote HIV-1 genome integration." evidence="3 8 9">
    <original>L</original>
    <variation>K</variation>
    <location>
        <position position="50"/>
    </location>
</feature>
<feature type="mutagenesis site" description="Complete loss of EMD, and histone H1/H3 binding. Reduces dsDNA and LEMD3/MAN1 binding." evidence="5 8 9">
    <original>V</original>
    <variation>E</variation>
    <location>
        <position position="51"/>
    </location>
</feature>
<feature type="mutagenesis site" description="No effect on LEMD3/MAN1 binding. Enhances histone H1/H3 binding." evidence="3 5 8 9">
    <original>K</original>
    <variation>A</variation>
    <location>
        <position position="53"/>
    </location>
</feature>
<feature type="mutagenesis site" description="Complete loss of EMD binding. Reduces LEMD3/MAN1 binding. Enhances histone H1/H3 binding." evidence="3 5 8 9">
    <original>K</original>
    <variation>E</variation>
    <location>
        <position position="53"/>
    </location>
</feature>
<feature type="mutagenesis site" description="Reduces LEMD3/MAN1 binding. No effect on histone H1/H3 binding." evidence="3 5 8 9">
    <original>K</original>
    <variation>A</variation>
    <location>
        <position position="54"/>
    </location>
</feature>
<feature type="mutagenesis site" description="Reduces binding to dsDNA." evidence="3 5 8 9">
    <original>K</original>
    <variation>E</variation>
    <location>
        <position position="54"/>
    </location>
</feature>
<feature type="mutagenesis site" description="Abolishes interaction with LEM domain-containing proteins without affecting homodimerization and DNA-binding. Does not affect its involvement in nuclear membrane reformation at the end of mitosis. Does not affect ability to outcompete CGAS for DNA-binding." evidence="20 23">
    <original>L</original>
    <variation>R</variation>
    <location>
        <position position="58"/>
    </location>
</feature>
<feature type="mutagenesis site" description="No effect on histone H1/H3 binding." evidence="9">
    <original>R</original>
    <variation>E</variation>
    <location>
        <position position="60"/>
    </location>
</feature>
<feature type="mutagenesis site" description="Complete loss of LEMD3/MAN1 binding. Enhances histone H1/H3 binding." evidence="3 8 9">
    <original>W</original>
    <variation>A</variation>
    <location>
        <position position="62"/>
    </location>
</feature>
<feature type="mutagenesis site" description="Enhances histone H1/H3 binding." evidence="9">
    <original>K</original>
    <variation>E</variation>
    <location>
        <position position="64"/>
    </location>
</feature>
<feature type="mutagenesis site" description="Reduces binding to dsDNA. No effect on histone H1/H3 binding." evidence="5 9">
    <original>R</original>
    <variation>E</variation>
    <location>
        <position position="75"/>
    </location>
</feature>
<feature type="mutagenesis site" description="No effect on histone H1/H3 and LEMD3/MAN1 binding." evidence="3 8 9">
    <original>C</original>
    <variation>A</variation>
    <location>
        <position position="80"/>
    </location>
</feature>
<feature type="mutagenesis site" description="No effect on histone H1/H3 binding." evidence="9">
    <original>R</original>
    <variation>E</variation>
    <location>
        <position position="82"/>
    </location>
</feature>
<feature type="helix" evidence="33">
    <location>
        <begin position="3"/>
        <end position="11"/>
    </location>
</feature>
<feature type="helix" evidence="33">
    <location>
        <begin position="20"/>
        <end position="22"/>
    </location>
</feature>
<feature type="helix" evidence="33">
    <location>
        <begin position="28"/>
        <end position="36"/>
    </location>
</feature>
<feature type="helix" evidence="33">
    <location>
        <begin position="42"/>
        <end position="51"/>
    </location>
</feature>
<feature type="turn" evidence="33">
    <location>
        <begin position="52"/>
        <end position="54"/>
    </location>
</feature>
<feature type="helix" evidence="33">
    <location>
        <begin position="56"/>
        <end position="67"/>
    </location>
</feature>
<feature type="helix" evidence="33">
    <location>
        <begin position="71"/>
        <end position="88"/>
    </location>
</feature>
<reference key="1">
    <citation type="journal article" date="1998" name="Proc. Natl. Acad. Sci. U.S.A.">
        <title>A previously unidentified host protein protects retroviral DNA from autointegration.</title>
        <authorList>
            <person name="Lee M.S."/>
            <person name="Craigie R."/>
        </authorList>
    </citation>
    <scope>NUCLEOTIDE SEQUENCE [MRNA]</scope>
    <scope>FUNCTION (MICROBIAL INFECTION)</scope>
    <scope>FUNCTION</scope>
</reference>
<reference key="2">
    <citation type="journal article" date="1998" name="Genomics">
        <title>Genomic and functional map of the chromosome 14 t(12;14) breakpoint cluster region in uterine leiomyoma.</title>
        <authorList>
            <person name="Lynch R.A."/>
            <person name="Piper M."/>
            <person name="Bankier A."/>
            <person name="Bhugra B."/>
            <person name="Surti U."/>
            <person name="Liu J."/>
            <person name="Buckler A."/>
            <person name="Dear P.H."/>
            <person name="Menon A.G."/>
        </authorList>
    </citation>
    <scope>NUCLEOTIDE SEQUENCE [MRNA]</scope>
    <scope>TISSUE SPECIFICITY</scope>
    <source>
        <tissue>Uterus</tissue>
    </source>
</reference>
<reference key="3">
    <citation type="submission" date="1998-05" db="EMBL/GenBank/DDBJ databases">
        <title>Human BAF homolog gene.</title>
        <authorList>
            <person name="Zhang J."/>
            <person name="Liu T."/>
            <person name="Ye M."/>
            <person name="Zhang Q."/>
            <person name="Fu G."/>
            <person name="Zhou J."/>
            <person name="Wu J."/>
            <person name="Shen Y."/>
            <person name="Yu M."/>
            <person name="Chen S."/>
            <person name="Mao M."/>
            <person name="Chen Z."/>
        </authorList>
    </citation>
    <scope>NUCLEOTIDE SEQUENCE [MRNA]</scope>
</reference>
<reference key="4">
    <citation type="submission" date="2004-06" db="EMBL/GenBank/DDBJ databases">
        <title>Cloning of human full open reading frames in Gateway(TM) system entry vector (pDONR201).</title>
        <authorList>
            <person name="Ebert L."/>
            <person name="Schick M."/>
            <person name="Neubert P."/>
            <person name="Schatten R."/>
            <person name="Henze S."/>
            <person name="Korn B."/>
        </authorList>
    </citation>
    <scope>NUCLEOTIDE SEQUENCE [LARGE SCALE MRNA]</scope>
</reference>
<reference key="5">
    <citation type="journal article" date="2004" name="Genome Res.">
        <title>The status, quality, and expansion of the NIH full-length cDNA project: the Mammalian Gene Collection (MGC).</title>
        <authorList>
            <consortium name="The MGC Project Team"/>
        </authorList>
    </citation>
    <scope>NUCLEOTIDE SEQUENCE [LARGE SCALE MRNA]</scope>
    <source>
        <tissue>Brain</tissue>
    </source>
</reference>
<reference key="6">
    <citation type="journal article" date="2000" name="J. Biol. Chem.">
        <title>Both the structure and DNA binding function of the barrier-to-autointegration factor contribute to reconstitution of HIV type 1 integration in vitro.</title>
        <authorList>
            <person name="Harris D."/>
            <person name="Engelman A."/>
        </authorList>
    </citation>
    <scope>FUNCTION (MICROBIAL INFECTION)</scope>
    <scope>MUTAGENESIS OF LYS-6; PRO-14; LYS-18; ILE-26; LYS-41; LEU-50; LYS-53; LYS-54; TRP-62 AND CYS-80</scope>
</reference>
<reference key="7">
    <citation type="journal article" date="2000" name="Proc. Natl. Acad. Sci. U.S.A.">
        <title>Barrier-to-autointegration factor (BAF) bridges DNA in a discrete, higher-order nucleoprotein complex.</title>
        <authorList>
            <person name="Zheng R."/>
            <person name="Ghirlando R."/>
            <person name="Lee M.S."/>
            <person name="Mizuuchi K."/>
            <person name="Krause M."/>
            <person name="Craigie R."/>
        </authorList>
    </citation>
    <scope>MULTIMERIZATION</scope>
    <scope>FUNCTION</scope>
</reference>
<reference key="8">
    <citation type="journal article" date="2001" name="J. Cell Sci.">
        <title>BAF is required for emerin assembly into the reforming nuclear envelope.</title>
        <authorList>
            <person name="Haraguchi T."/>
            <person name="Koujin T."/>
            <person name="Segura-Totten M."/>
            <person name="Lee K.K."/>
            <person name="Matsuoka Y."/>
            <person name="Yoneda Y."/>
            <person name="Wilson K.L."/>
            <person name="Hiraoka Y."/>
        </authorList>
    </citation>
    <scope>FUNCTION</scope>
    <scope>INTERACTION WITH EMD</scope>
</reference>
<reference key="9">
    <citation type="journal article" date="2002" name="J. Cell Biol.">
        <title>Barrier-to-autointegration factor: major roles in chromatin decondensation and nuclear assembly.</title>
        <authorList>
            <person name="Segura-Totten M."/>
            <person name="Kowalski A.K."/>
            <person name="Craigie R."/>
            <person name="Wilson K.L."/>
        </authorList>
    </citation>
    <scope>FUNCTION</scope>
    <scope>MUTAGENESIS OF LYS-6; ASP-9; GLY-25; GLY-27; LEU-46; GLY-47; VAL-51; LYS-53; LYS-54 AND ARG-75</scope>
</reference>
<reference key="10">
    <citation type="journal article" date="2003" name="J. Virol.">
        <title>The barrier-to-autointegration factor is a component of functional human immunodeficiency virus type 1 preintegration complexes.</title>
        <authorList>
            <person name="Lin C.W."/>
            <person name="Engelman A."/>
        </authorList>
    </citation>
    <scope>INTERACTION WITH HIV-1 PRE-INTEGRATION COMPLEX (MICROBIAL INFECTION)</scope>
</reference>
<reference key="11">
    <citation type="journal article" date="2003" name="J. Virol.">
        <title>Barrier-to-autointegration factor BAF binds p55 Gag and matrix and is a host component of human immunodeficiency virus type 1 virions.</title>
        <authorList>
            <person name="Mansharamani M."/>
            <person name="Graham D.R."/>
            <person name="Monie D."/>
            <person name="Lee K.K."/>
            <person name="Hildreth J.E."/>
            <person name="Siliciano R.F."/>
            <person name="Wilson K.L."/>
        </authorList>
    </citation>
    <scope>INTERACTION WITH HIV-1 MATRIX PROTEIN (MICROBIAL INFECTION)</scope>
</reference>
<reference key="12">
    <citation type="journal article" date="2005" name="J. Biol. Chem.">
        <title>Direct binding of nuclear membrane protein MAN1 to emerin in vitro and two modes of binding to barrier-to-autointegration factor.</title>
        <authorList>
            <person name="Mansharamani M."/>
            <person name="Wilson K.L."/>
        </authorList>
    </citation>
    <scope>INTERACTION WITH LEMD3/MAN1</scope>
    <scope>MUTAGENESIS OF LYS-6; ARG-8; ASP-9; PRO-14; GLY-25; ILE-26; ARG-37; LYS-41; LEU-46; GLY-47; LEU-50; VAL-51; LYS-53; LYS-54; TRP-62 AND CYS-80</scope>
    <scope>DOMAIN</scope>
</reference>
<reference key="13">
    <citation type="journal article" date="2005" name="J. Biol. Chem.">
        <title>Binding of barrier to autointegration factor (BAF) to histone H3 and selected linker histones including H1.1.</title>
        <authorList>
            <person name="de Oca R.M."/>
            <person name="Lee K.K."/>
            <person name="Wilson K.L."/>
        </authorList>
    </citation>
    <scope>INTERACTION WITH HISTONE H1/H3</scope>
    <scope>MUTAGENESIS OF LYS-6; ARG-8; ASP-9; PRO-14; LYS-18; GLY-25; ILE-26; VAL-29; LYS-32; LYS-33; ARG-37; LYS-41; LEU-46; GLY-47; LEU-50; VAL-51; LYS-53; LYS-54; ARG-60; TRP-62; LYS-64; ARG-75; CYS-80 AND ARG-82</scope>
</reference>
<reference key="14">
    <citation type="journal article" date="2006" name="Mol. Biol. Cell">
        <title>Barrier-to-autointegration factor phosphorylation on Ser-4 regulates emerin binding to lamin A in vitro and emerin localization in vivo.</title>
        <authorList>
            <person name="Bengtsson L."/>
            <person name="Wilson K.L."/>
        </authorList>
    </citation>
    <scope>PHOSPHORYLATION AT SER-4</scope>
    <scope>MUTAGENESIS OF SER-4</scope>
</reference>
<reference key="15">
    <citation type="journal article" date="2006" name="Exp. Cell Res.">
        <title>Barrier-to-autointegration factor-like (BAF-L): a proposed regulator of BAF.</title>
        <authorList>
            <person name="Tifft K.E."/>
            <person name="Segura-Totten M."/>
            <person name="Lee K.K."/>
            <person name="Wilson K.L."/>
        </authorList>
    </citation>
    <scope>INTERACTION WITH BANF2</scope>
</reference>
<reference key="16">
    <citation type="journal article" date="2006" name="Mol. Biol. Cell">
        <title>The vaccinia-related kinases phosphorylate the N' terminus of BAF, regulating its interaction with DNA and its retention in the nucleus.</title>
        <authorList>
            <person name="Nichols R.J."/>
            <person name="Wiebe M.S."/>
            <person name="Traktman P."/>
        </authorList>
    </citation>
    <scope>PHOSPHORYLATION AT THR-2; THR-3 AND SER-4</scope>
    <scope>SUBCELLULAR LOCATION</scope>
    <scope>DNA-BINDING</scope>
    <scope>MUTAGENESIS OF 2-THR--SER-4</scope>
</reference>
<reference key="17">
    <citation type="journal article" date="2006" name="Nature">
        <title>The inner-nuclear-envelope protein emerin regulates HIV-1 infectivity.</title>
        <authorList>
            <person name="Jacque J.-M."/>
            <person name="Stevenson M."/>
        </authorList>
    </citation>
    <scope>FUNCTION (MICROBIAL INFECTION)</scope>
</reference>
<reference key="18">
    <citation type="journal article" date="2007" name="Cell Host Microbe">
        <title>Poxviral B1 kinase overcomes barrier to autointegration factor, a host defense against virus replication.</title>
        <authorList>
            <person name="Wiebe M.S."/>
            <person name="Traktman P."/>
        </authorList>
    </citation>
    <scope>FUNCTION</scope>
    <scope>SUBCELLULAR LOCATION</scope>
    <scope>PHOSPHORYLATION (MICROBIAL INFECTION)</scope>
</reference>
<reference key="19">
    <citation type="journal article" date="2009" name="Anal. Chem.">
        <title>Lys-N and trypsin cover complementary parts of the phosphoproteome in a refined SCX-based approach.</title>
        <authorList>
            <person name="Gauci S."/>
            <person name="Helbig A.O."/>
            <person name="Slijper M."/>
            <person name="Krijgsveld J."/>
            <person name="Heck A.J."/>
            <person name="Mohammed S."/>
        </authorList>
    </citation>
    <scope>ACETYLATION [LARGE SCALE ANALYSIS] AT THR-2</scope>
    <scope>CLEAVAGE OF INITIATOR METHIONINE [LARGE SCALE ANALYSIS]</scope>
    <scope>IDENTIFICATION BY MASS SPECTROMETRY [LARGE SCALE ANALYSIS]</scope>
</reference>
<reference key="20">
    <citation type="journal article" date="2009" name="Science">
        <title>Lysine acetylation targets protein complexes and co-regulates major cellular functions.</title>
        <authorList>
            <person name="Choudhary C."/>
            <person name="Kumar C."/>
            <person name="Gnad F."/>
            <person name="Nielsen M.L."/>
            <person name="Rehman M."/>
            <person name="Walther T.C."/>
            <person name="Olsen J.V."/>
            <person name="Mann M."/>
        </authorList>
    </citation>
    <scope>IDENTIFICATION BY MASS SPECTROMETRY [LARGE SCALE ANALYSIS]</scope>
</reference>
<reference key="21">
    <citation type="journal article" date="2010" name="Sci. Signal.">
        <title>Quantitative phosphoproteomics reveals widespread full phosphorylation site occupancy during mitosis.</title>
        <authorList>
            <person name="Olsen J.V."/>
            <person name="Vermeulen M."/>
            <person name="Santamaria A."/>
            <person name="Kumar C."/>
            <person name="Miller M.L."/>
            <person name="Jensen L.J."/>
            <person name="Gnad F."/>
            <person name="Cox J."/>
            <person name="Jensen T.S."/>
            <person name="Nigg E.A."/>
            <person name="Brunak S."/>
            <person name="Mann M."/>
        </authorList>
    </citation>
    <scope>ACETYLATION [LARGE SCALE ANALYSIS] AT MET-1</scope>
    <scope>IDENTIFICATION BY MASS SPECTROMETRY [LARGE SCALE ANALYSIS]</scope>
    <source>
        <tissue>Cervix carcinoma</tissue>
    </source>
</reference>
<reference key="22">
    <citation type="journal article" date="2011" name="BMC Syst. Biol.">
        <title>Initial characterization of the human central proteome.</title>
        <authorList>
            <person name="Burkard T.R."/>
            <person name="Planyavsky M."/>
            <person name="Kaupe I."/>
            <person name="Breitwieser F.P."/>
            <person name="Buerckstuemmer T."/>
            <person name="Bennett K.L."/>
            <person name="Superti-Furga G."/>
            <person name="Colinge J."/>
        </authorList>
    </citation>
    <scope>IDENTIFICATION BY MASS SPECTROMETRY [LARGE SCALE ANALYSIS]</scope>
</reference>
<reference key="23">
    <citation type="journal article" date="2012" name="Cell">
        <title>Coordination of kinase and phosphatase activities by Lem4 enables nuclear envelope reassembly during mitosis.</title>
        <authorList>
            <person name="Asencio C."/>
            <person name="Davidson I.F."/>
            <person name="Santarella-Mellwig R."/>
            <person name="Ly-Hartig T.B."/>
            <person name="Mall M."/>
            <person name="Wallenfang M.R."/>
            <person name="Mattaj I.W."/>
            <person name="Gorjanacz M."/>
        </authorList>
    </citation>
    <scope>PHOSPHORYLATION</scope>
    <scope>DEPHOSPHORYLATION</scope>
    <scope>INTERACTION WITH ANKLE2</scope>
</reference>
<reference key="24">
    <citation type="journal article" date="2004" name="Trends Cell Biol.">
        <title>BAF: roles in chromatin, nuclear structure and retrovirus integration.</title>
        <authorList>
            <person name="Segura-Totten M."/>
            <person name="Wilson K.L."/>
        </authorList>
    </citation>
    <scope>REVIEW</scope>
</reference>
<reference key="25">
    <citation type="journal article" date="2012" name="J. Cell Sci.">
        <title>The endonuclease Ankle1 requires its LEM and GIY-YIG motifs for DNA cleavage in vivo.</title>
        <authorList>
            <person name="Brachner A."/>
            <person name="Braun J."/>
            <person name="Ghodgaonkar M."/>
            <person name="Castor D."/>
            <person name="Zlopasa L."/>
            <person name="Ehrlich V."/>
            <person name="Jiricny J."/>
            <person name="Gotzmann J."/>
            <person name="Knasmueller S."/>
            <person name="Foisner R."/>
        </authorList>
    </citation>
    <scope>INTERACTION WITH ANKLE1</scope>
    <scope>SUBUNIT</scope>
    <scope>DIMERIZATION</scope>
</reference>
<reference key="26">
    <citation type="journal article" date="2014" name="J. Virol.">
        <title>Cell- and virus-mediated regulation of the barrier-to-autointegration factor's phosphorylation state controls its DNA binding, dimerization, subcellular localization, and antipoxviral activity.</title>
        <authorList>
            <person name="Jamin A."/>
            <person name="Wicklund A."/>
            <person name="Wiebe M.S."/>
        </authorList>
    </citation>
    <scope>PHOSPHORYLATION (MICROBIAL INFECTION)</scope>
    <scope>SUBCELLULAR LOCATION</scope>
    <scope>MUTAGENESIS OF 2-THR--SER-4</scope>
</reference>
<reference key="27">
    <citation type="journal article" date="2015" name="Proc. Natl. Acad. Sci. U.S.A.">
        <title>BAF is a cytosolic DNA sensor that leads to exogenous DNA avoiding autophagy.</title>
        <authorList>
            <person name="Kobayashi S."/>
            <person name="Koujin T."/>
            <person name="Kojidani T."/>
            <person name="Osakada H."/>
            <person name="Mori C."/>
            <person name="Hiraoka Y."/>
            <person name="Haraguchi T."/>
        </authorList>
    </citation>
    <scope>FUNCTION</scope>
</reference>
<reference key="28">
    <citation type="journal article" date="2015" name="Proteomics">
        <title>N-terminome analysis of the human mitochondrial proteome.</title>
        <authorList>
            <person name="Vaca Jacome A.S."/>
            <person name="Rabilloud T."/>
            <person name="Schaeffer-Reiss C."/>
            <person name="Rompais M."/>
            <person name="Ayoub D."/>
            <person name="Lane L."/>
            <person name="Bairoch A."/>
            <person name="Van Dorsselaer A."/>
            <person name="Carapito C."/>
        </authorList>
    </citation>
    <scope>IDENTIFICATION BY MASS SPECTROMETRY [LARGE SCALE ANALYSIS]</scope>
</reference>
<reference key="29">
    <citation type="journal article" date="2017" name="Cell">
        <title>DNA cross-bridging shapes a single nucleus from a set of mitotic chromosomes.</title>
        <authorList>
            <person name="Samwer M."/>
            <person name="Schneider M.W.G."/>
            <person name="Hoefler R."/>
            <person name="Schmalhorst P.S."/>
            <person name="Jude J.G."/>
            <person name="Zuber J."/>
            <person name="Gerlich D.W."/>
        </authorList>
    </citation>
    <scope>FUNCTION</scope>
    <scope>SUBCELLULAR LOCATION</scope>
    <scope>SUBUNIT</scope>
    <scope>DNA-BINDING</scope>
    <scope>MUTAGENESIS OF GLY-47 AND LEU-58</scope>
</reference>
<reference key="30">
    <citation type="journal article" date="2020" name="Nature">
        <title>LEM2 phase separation promotes ESCRT-mediated nuclear envelope reformation.</title>
        <authorList>
            <person name="von Appen A."/>
            <person name="LaJoie D."/>
            <person name="Johnson I.E."/>
            <person name="Trnka M.J."/>
            <person name="Pick S.M."/>
            <person name="Burlingame A.L."/>
            <person name="Ullman K.S."/>
            <person name="Frost A."/>
        </authorList>
    </citation>
    <scope>INTERACTION WITH LEMD2</scope>
</reference>
<reference key="31">
    <citation type="journal article" date="2019" name="Nat. Commun.">
        <title>Barrier-to-autointegration factor 1 (Banf1) regulates poly [ADP-ribose] polymerase 1 (PARP1) activity following oxidative DNA damage.</title>
        <authorList>
            <person name="Bolderson E."/>
            <person name="Burgess J.T."/>
            <person name="Li J."/>
            <person name="Gandhi N.S."/>
            <person name="Boucher D."/>
            <person name="Croft L.V."/>
            <person name="Beard S."/>
            <person name="Plowman J.J."/>
            <person name="Suraweera A."/>
            <person name="Adams M.N."/>
            <person name="Naqi A."/>
            <person name="Zhang S.D."/>
            <person name="Sinclair D.A."/>
            <person name="O'Byrne K.J."/>
            <person name="Richard D.J."/>
        </authorList>
    </citation>
    <scope>FUNCTION</scope>
    <scope>SUBCELLULAR LOCATION</scope>
    <scope>INTERACTION WITH PARP1</scope>
    <scope>MUTAGENESIS OF ASP-9</scope>
</reference>
<reference key="32">
    <citation type="journal article" date="2020" name="Science">
        <title>BAF restricts cGAS on nuclear DNA to prevent innate immune activation.</title>
        <authorList>
            <person name="Guey B."/>
            <person name="Wischnewski M."/>
            <person name="Decout A."/>
            <person name="Makasheva K."/>
            <person name="Kaynak M."/>
            <person name="Sakar M.S."/>
            <person name="Fierz B."/>
            <person name="Ablasser A."/>
        </authorList>
    </citation>
    <scope>FUNCTION</scope>
    <scope>SUBCELLULAR LOCATION</scope>
    <scope>DNA-BINDING</scope>
    <scope>MUTAGENESIS OF GLY-47 AND LEU-58</scope>
</reference>
<reference key="33">
    <citation type="journal article" date="1998" name="Nat. Struct. Biol.">
        <title>Solution structure of the cellular factor BAF responsible for protecting retroviral DNA from autointegration.</title>
        <authorList>
            <person name="Cai M."/>
            <person name="Huang Y."/>
            <person name="Zheng R."/>
            <person name="Wei S.Q."/>
            <person name="Ghirlando R."/>
            <person name="Lee M.S."/>
            <person name="Craigie R."/>
            <person name="Gronenborn A.M."/>
            <person name="Clore G.M."/>
        </authorList>
    </citation>
    <scope>STRUCTURE BY NMR</scope>
</reference>
<reference key="34">
    <citation type="journal article" date="2000" name="Biochemistry">
        <title>Structural basis of DNA bridging by barrier-to-autointegration factor.</title>
        <authorList>
            <person name="Umland T.C."/>
            <person name="Wei S.-Q."/>
            <person name="Craigie R."/>
            <person name="Davies D.R."/>
        </authorList>
    </citation>
    <scope>X-RAY CRYSTALLOGRAPHY (1.9 ANGSTROMS) OF HOMODIMER</scope>
    <scope>DOMAIN</scope>
</reference>
<reference key="35">
    <citation type="journal article" date="2011" name="Am. J. Hum. Genet.">
        <title>Exome sequencing and functional analysis identifies BANF1 mutation as the cause of a hereditary progeroid syndrome.</title>
        <authorList>
            <person name="Puente X.S."/>
            <person name="Quesada V."/>
            <person name="Osorio F.G."/>
            <person name="Cabanillas R."/>
            <person name="Cadinanos J."/>
            <person name="Fraile J.M."/>
            <person name="Ordonez G.R."/>
            <person name="Puente D.A."/>
            <person name="Gutierrez-Fernandez A."/>
            <person name="Fanjul-Fernandez M."/>
            <person name="Levy N."/>
            <person name="Freije J.M."/>
            <person name="Lopez-Otin C."/>
        </authorList>
    </citation>
    <scope>VARIANT NGPS THR-12</scope>
</reference>
<accession>O75531</accession>
<accession>O60558</accession>
<accession>Q6FGG7</accession>
<dbReference type="EMBL" id="AF070447">
    <property type="protein sequence ID" value="AAC23575.1"/>
    <property type="molecule type" value="mRNA"/>
</dbReference>
<dbReference type="EMBL" id="AF044773">
    <property type="protein sequence ID" value="AAC08964.1"/>
    <property type="status" value="ALT_FRAME"/>
    <property type="molecule type" value="mRNA"/>
</dbReference>
<dbReference type="EMBL" id="AF068235">
    <property type="protein sequence ID" value="AAD15901.1"/>
    <property type="molecule type" value="mRNA"/>
</dbReference>
<dbReference type="EMBL" id="CR542140">
    <property type="protein sequence ID" value="CAG46937.1"/>
    <property type="molecule type" value="mRNA"/>
</dbReference>
<dbReference type="EMBL" id="BC005942">
    <property type="protein sequence ID" value="AAH05942.1"/>
    <property type="molecule type" value="mRNA"/>
</dbReference>
<dbReference type="EMBL" id="BC107702">
    <property type="protein sequence ID" value="AAI07703.1"/>
    <property type="molecule type" value="mRNA"/>
</dbReference>
<dbReference type="CCDS" id="CCDS8125.1"/>
<dbReference type="RefSeq" id="NP_001137457.1">
    <property type="nucleotide sequence ID" value="NM_001143985.1"/>
</dbReference>
<dbReference type="RefSeq" id="NP_003851.1">
    <property type="nucleotide sequence ID" value="NM_003860.4"/>
</dbReference>
<dbReference type="RefSeq" id="XP_016874003.1">
    <property type="nucleotide sequence ID" value="XM_017018514.1"/>
</dbReference>
<dbReference type="RefSeq" id="XP_016874004.1">
    <property type="nucleotide sequence ID" value="XM_017018515.3"/>
</dbReference>
<dbReference type="RefSeq" id="XP_054226339.1">
    <property type="nucleotide sequence ID" value="XM_054370364.1"/>
</dbReference>
<dbReference type="PDB" id="1CI4">
    <property type="method" value="X-ray"/>
    <property type="resolution" value="1.90 A"/>
    <property type="chains" value="A/B=1-89"/>
</dbReference>
<dbReference type="PDB" id="1QCK">
    <property type="method" value="NMR"/>
    <property type="chains" value="A/B=1-89"/>
</dbReference>
<dbReference type="PDB" id="2BZF">
    <property type="method" value="X-ray"/>
    <property type="resolution" value="2.87 A"/>
    <property type="chains" value="A=1-89"/>
</dbReference>
<dbReference type="PDB" id="2EZX">
    <property type="method" value="NMR"/>
    <property type="chains" value="A/B=1-89"/>
</dbReference>
<dbReference type="PDB" id="2EZY">
    <property type="method" value="NMR"/>
    <property type="chains" value="A/B=1-89"/>
</dbReference>
<dbReference type="PDB" id="2EZZ">
    <property type="method" value="NMR"/>
    <property type="chains" value="A/B=1-89"/>
</dbReference>
<dbReference type="PDB" id="2ODG">
    <property type="method" value="NMR"/>
    <property type="chains" value="A/B=1-89"/>
</dbReference>
<dbReference type="PDB" id="6GHD">
    <property type="method" value="X-ray"/>
    <property type="resolution" value="2.10 A"/>
    <property type="chains" value="A/C/D/E=2-89"/>
</dbReference>
<dbReference type="PDB" id="6RPR">
    <property type="method" value="X-ray"/>
    <property type="resolution" value="2.26 A"/>
    <property type="chains" value="D/E=3-89"/>
</dbReference>
<dbReference type="PDB" id="6UNT">
    <property type="method" value="X-ray"/>
    <property type="resolution" value="1.75 A"/>
    <property type="chains" value="A/B=1-89"/>
</dbReference>
<dbReference type="PDB" id="6URE">
    <property type="method" value="X-ray"/>
    <property type="resolution" value="1.65 A"/>
    <property type="chains" value="A/B=1-89"/>
</dbReference>
<dbReference type="PDB" id="6URJ">
    <property type="method" value="X-ray"/>
    <property type="resolution" value="1.65 A"/>
    <property type="chains" value="A/B=1-89"/>
</dbReference>
<dbReference type="PDB" id="6URK">
    <property type="method" value="X-ray"/>
    <property type="resolution" value="1.86 A"/>
    <property type="chains" value="A/B=1-89"/>
</dbReference>
<dbReference type="PDB" id="6URL">
    <property type="method" value="X-ray"/>
    <property type="resolution" value="1.72 A"/>
    <property type="chains" value="A/B=1-89"/>
</dbReference>
<dbReference type="PDB" id="6URN">
    <property type="method" value="X-ray"/>
    <property type="resolution" value="1.68 A"/>
    <property type="chains" value="A/B=1-89"/>
</dbReference>
<dbReference type="PDB" id="6URR">
    <property type="method" value="X-ray"/>
    <property type="resolution" value="1.80 A"/>
    <property type="chains" value="A/B=1-89"/>
</dbReference>
<dbReference type="PDB" id="6URZ">
    <property type="method" value="X-ray"/>
    <property type="resolution" value="1.65 A"/>
    <property type="chains" value="A/B=1-89"/>
</dbReference>
<dbReference type="PDB" id="6US0">
    <property type="method" value="X-ray"/>
    <property type="resolution" value="1.65 A"/>
    <property type="chains" value="A/B=1-89"/>
</dbReference>
<dbReference type="PDB" id="6US1">
    <property type="method" value="X-ray"/>
    <property type="resolution" value="1.65 A"/>
    <property type="chains" value="A/B=1-89"/>
</dbReference>
<dbReference type="PDB" id="6US7">
    <property type="method" value="X-ray"/>
    <property type="resolution" value="1.65 A"/>
    <property type="chains" value="A/B=1-89"/>
</dbReference>
<dbReference type="PDB" id="6USB">
    <property type="method" value="X-ray"/>
    <property type="resolution" value="1.68 A"/>
    <property type="chains" value="A/B=1-89"/>
</dbReference>
<dbReference type="PDB" id="6USD">
    <property type="method" value="X-ray"/>
    <property type="resolution" value="1.65 A"/>
    <property type="chains" value="A/B=1-89"/>
</dbReference>
<dbReference type="PDB" id="6USI">
    <property type="method" value="X-ray"/>
    <property type="resolution" value="1.65 A"/>
    <property type="chains" value="A/B=1-89"/>
</dbReference>
<dbReference type="PDB" id="7ABM">
    <property type="method" value="X-ray"/>
    <property type="resolution" value="3.00 A"/>
    <property type="chains" value="A=3-88"/>
</dbReference>
<dbReference type="PDB" id="7NDY">
    <property type="method" value="X-ray"/>
    <property type="resolution" value="1.44 A"/>
    <property type="chains" value="A/B=2-89"/>
</dbReference>
<dbReference type="PDB" id="7Z21">
    <property type="method" value="X-ray"/>
    <property type="resolution" value="1.63 A"/>
    <property type="chains" value="A/B/C/D=2-89"/>
</dbReference>
<dbReference type="PDB" id="9J8M">
    <property type="method" value="EM"/>
    <property type="resolution" value="3.82 A"/>
    <property type="chains" value="K/L=1-89"/>
</dbReference>
<dbReference type="PDB" id="9J8N">
    <property type="method" value="EM"/>
    <property type="resolution" value="7.14 A"/>
    <property type="chains" value="K/L/N/O/k/l/n/o=1-89"/>
</dbReference>
<dbReference type="PDB" id="9J8O">
    <property type="method" value="EM"/>
    <property type="resolution" value="4.05 A"/>
    <property type="chains" value="K/L/k/l=1-89"/>
</dbReference>
<dbReference type="PDBsum" id="1CI4"/>
<dbReference type="PDBsum" id="1QCK"/>
<dbReference type="PDBsum" id="2BZF"/>
<dbReference type="PDBsum" id="2EZX"/>
<dbReference type="PDBsum" id="2EZY"/>
<dbReference type="PDBsum" id="2EZZ"/>
<dbReference type="PDBsum" id="2ODG"/>
<dbReference type="PDBsum" id="6GHD"/>
<dbReference type="PDBsum" id="6RPR"/>
<dbReference type="PDBsum" id="6UNT"/>
<dbReference type="PDBsum" id="6URE"/>
<dbReference type="PDBsum" id="6URJ"/>
<dbReference type="PDBsum" id="6URK"/>
<dbReference type="PDBsum" id="6URL"/>
<dbReference type="PDBsum" id="6URN"/>
<dbReference type="PDBsum" id="6URR"/>
<dbReference type="PDBsum" id="6URZ"/>
<dbReference type="PDBsum" id="6US0"/>
<dbReference type="PDBsum" id="6US1"/>
<dbReference type="PDBsum" id="6US7"/>
<dbReference type="PDBsum" id="6USB"/>
<dbReference type="PDBsum" id="6USD"/>
<dbReference type="PDBsum" id="6USI"/>
<dbReference type="PDBsum" id="7ABM"/>
<dbReference type="PDBsum" id="7NDY"/>
<dbReference type="PDBsum" id="7Z21"/>
<dbReference type="PDBsum" id="9J8M"/>
<dbReference type="PDBsum" id="9J8N"/>
<dbReference type="PDBsum" id="9J8O"/>
<dbReference type="EMDB" id="EMD-61231"/>
<dbReference type="EMDB" id="EMD-61232"/>
<dbReference type="EMDB" id="EMD-61233"/>
<dbReference type="SMR" id="O75531"/>
<dbReference type="BioGRID" id="114342">
    <property type="interactions" value="220"/>
</dbReference>
<dbReference type="CORUM" id="O75531"/>
<dbReference type="DIP" id="DIP-50395N"/>
<dbReference type="FunCoup" id="O75531">
    <property type="interactions" value="3417"/>
</dbReference>
<dbReference type="IntAct" id="O75531">
    <property type="interactions" value="88"/>
</dbReference>
<dbReference type="MINT" id="O75531"/>
<dbReference type="STRING" id="9606.ENSP00000433760"/>
<dbReference type="GlyGen" id="O75531">
    <property type="glycosylation" value="1 site, 1 O-linked glycan (1 site)"/>
</dbReference>
<dbReference type="iPTMnet" id="O75531"/>
<dbReference type="PhosphoSitePlus" id="O75531"/>
<dbReference type="SwissPalm" id="O75531"/>
<dbReference type="BioMuta" id="BANF1"/>
<dbReference type="jPOST" id="O75531"/>
<dbReference type="MassIVE" id="O75531"/>
<dbReference type="PaxDb" id="9606-ENSP00000310275"/>
<dbReference type="PeptideAtlas" id="O75531"/>
<dbReference type="ProteomicsDB" id="50071"/>
<dbReference type="Pumba" id="O75531"/>
<dbReference type="TopDownProteomics" id="O75531"/>
<dbReference type="Antibodypedia" id="30040">
    <property type="antibodies" value="271 antibodies from 29 providers"/>
</dbReference>
<dbReference type="DNASU" id="8815"/>
<dbReference type="Ensembl" id="ENST00000312175.7">
    <property type="protein sequence ID" value="ENSP00000310275.2"/>
    <property type="gene ID" value="ENSG00000175334.8"/>
</dbReference>
<dbReference type="Ensembl" id="ENST00000445560.6">
    <property type="protein sequence ID" value="ENSP00000416128.2"/>
    <property type="gene ID" value="ENSG00000175334.8"/>
</dbReference>
<dbReference type="Ensembl" id="ENST00000527348.1">
    <property type="protein sequence ID" value="ENSP00000432867.1"/>
    <property type="gene ID" value="ENSG00000175334.8"/>
</dbReference>
<dbReference type="Ensembl" id="ENST00000533166.5">
    <property type="protein sequence ID" value="ENSP00000433760.1"/>
    <property type="gene ID" value="ENSG00000175334.8"/>
</dbReference>
<dbReference type="GeneID" id="8815"/>
<dbReference type="KEGG" id="hsa:8815"/>
<dbReference type="MANE-Select" id="ENST00000312175.7">
    <property type="protein sequence ID" value="ENSP00000310275.2"/>
    <property type="RefSeq nucleotide sequence ID" value="NM_003860.4"/>
    <property type="RefSeq protein sequence ID" value="NP_003851.1"/>
</dbReference>
<dbReference type="UCSC" id="uc001ogo.4">
    <property type="organism name" value="human"/>
</dbReference>
<dbReference type="AGR" id="HGNC:17397"/>
<dbReference type="CTD" id="8815"/>
<dbReference type="DisGeNET" id="8815"/>
<dbReference type="GeneCards" id="BANF1"/>
<dbReference type="HGNC" id="HGNC:17397">
    <property type="gene designation" value="BANF1"/>
</dbReference>
<dbReference type="HPA" id="ENSG00000175334">
    <property type="expression patterns" value="Low tissue specificity"/>
</dbReference>
<dbReference type="MalaCards" id="BANF1"/>
<dbReference type="MIM" id="603811">
    <property type="type" value="gene"/>
</dbReference>
<dbReference type="MIM" id="614008">
    <property type="type" value="phenotype"/>
</dbReference>
<dbReference type="neXtProt" id="NX_O75531"/>
<dbReference type="OpenTargets" id="ENSG00000175334"/>
<dbReference type="Orphanet" id="280576">
    <property type="disease" value="Nestor-Guillermo progeria syndrome"/>
</dbReference>
<dbReference type="PharmGKB" id="PA134903639"/>
<dbReference type="VEuPathDB" id="HostDB:ENSG00000175334"/>
<dbReference type="eggNOG" id="KOG4233">
    <property type="taxonomic scope" value="Eukaryota"/>
</dbReference>
<dbReference type="GeneTree" id="ENSGT00390000018613"/>
<dbReference type="HOGENOM" id="CLU_167806_0_0_1"/>
<dbReference type="InParanoid" id="O75531"/>
<dbReference type="OMA" id="SKQQGDC"/>
<dbReference type="OrthoDB" id="9997163at2759"/>
<dbReference type="PAN-GO" id="O75531">
    <property type="GO annotations" value="4 GO annotations based on evolutionary models"/>
</dbReference>
<dbReference type="PhylomeDB" id="O75531"/>
<dbReference type="TreeFam" id="TF315060"/>
<dbReference type="PathwayCommons" id="O75531"/>
<dbReference type="Reactome" id="R-HSA-162592">
    <property type="pathway name" value="Integration of provirus"/>
</dbReference>
<dbReference type="Reactome" id="R-HSA-164843">
    <property type="pathway name" value="2-LTR circle formation"/>
</dbReference>
<dbReference type="Reactome" id="R-HSA-175567">
    <property type="pathway name" value="Integration of viral DNA into host genomic DNA"/>
</dbReference>
<dbReference type="Reactome" id="R-HSA-177539">
    <property type="pathway name" value="Autointegration results in viral DNA circles"/>
</dbReference>
<dbReference type="Reactome" id="R-HSA-180689">
    <property type="pathway name" value="APOBEC3G mediated resistance to HIV-1 infection"/>
</dbReference>
<dbReference type="Reactome" id="R-HSA-180910">
    <property type="pathway name" value="Vpr-mediated nuclear import of PICs"/>
</dbReference>
<dbReference type="Reactome" id="R-HSA-2980766">
    <property type="pathway name" value="Nuclear Envelope Breakdown"/>
</dbReference>
<dbReference type="Reactome" id="R-HSA-2995383">
    <property type="pathway name" value="Initiation of Nuclear Envelope (NE) Reformation"/>
</dbReference>
<dbReference type="SignaLink" id="O75531"/>
<dbReference type="SIGNOR" id="O75531"/>
<dbReference type="BioGRID-ORCS" id="8815">
    <property type="hits" value="787 hits in 1096 CRISPR screens"/>
</dbReference>
<dbReference type="CD-CODE" id="91857CE7">
    <property type="entry name" value="Nucleolus"/>
</dbReference>
<dbReference type="CD-CODE" id="DEE660B4">
    <property type="entry name" value="Stress granule"/>
</dbReference>
<dbReference type="ChiTaRS" id="BANF1">
    <property type="organism name" value="human"/>
</dbReference>
<dbReference type="EvolutionaryTrace" id="O75531"/>
<dbReference type="GeneWiki" id="Barrier_to_autointegration_factor_1"/>
<dbReference type="GenomeRNAi" id="8815"/>
<dbReference type="Pharos" id="O75531">
    <property type="development level" value="Tbio"/>
</dbReference>
<dbReference type="PRO" id="PR:O75531"/>
<dbReference type="Proteomes" id="UP000005640">
    <property type="component" value="Chromosome 11"/>
</dbReference>
<dbReference type="RNAct" id="O75531">
    <property type="molecule type" value="protein"/>
</dbReference>
<dbReference type="Bgee" id="ENSG00000175334">
    <property type="expression patterns" value="Expressed in ganglionic eminence and 195 other cell types or tissues"/>
</dbReference>
<dbReference type="ExpressionAtlas" id="O75531">
    <property type="expression patterns" value="baseline and differential"/>
</dbReference>
<dbReference type="GO" id="GO:0000785">
    <property type="term" value="C:chromatin"/>
    <property type="evidence" value="ECO:0000314"/>
    <property type="project" value="UniProtKB"/>
</dbReference>
<dbReference type="GO" id="GO:0000793">
    <property type="term" value="C:condensed chromosome"/>
    <property type="evidence" value="ECO:0000314"/>
    <property type="project" value="UniProtKB"/>
</dbReference>
<dbReference type="GO" id="GO:0005737">
    <property type="term" value="C:cytoplasm"/>
    <property type="evidence" value="ECO:0000314"/>
    <property type="project" value="UniProtKB"/>
</dbReference>
<dbReference type="GO" id="GO:0005829">
    <property type="term" value="C:cytosol"/>
    <property type="evidence" value="ECO:0000314"/>
    <property type="project" value="HPA"/>
</dbReference>
<dbReference type="GO" id="GO:0005635">
    <property type="term" value="C:nuclear envelope"/>
    <property type="evidence" value="ECO:0007669"/>
    <property type="project" value="UniProtKB-SubCell"/>
</dbReference>
<dbReference type="GO" id="GO:0005654">
    <property type="term" value="C:nucleoplasm"/>
    <property type="evidence" value="ECO:0000314"/>
    <property type="project" value="HPA"/>
</dbReference>
<dbReference type="GO" id="GO:0005634">
    <property type="term" value="C:nucleus"/>
    <property type="evidence" value="ECO:0000314"/>
    <property type="project" value="UniProtKB"/>
</dbReference>
<dbReference type="GO" id="GO:0003677">
    <property type="term" value="F:DNA binding"/>
    <property type="evidence" value="ECO:0000318"/>
    <property type="project" value="GO_Central"/>
</dbReference>
<dbReference type="GO" id="GO:0003690">
    <property type="term" value="F:double-stranded DNA binding"/>
    <property type="evidence" value="ECO:0000314"/>
    <property type="project" value="UniProtKB"/>
</dbReference>
<dbReference type="GO" id="GO:0042802">
    <property type="term" value="F:identical protein binding"/>
    <property type="evidence" value="ECO:0000353"/>
    <property type="project" value="IntAct"/>
</dbReference>
<dbReference type="GO" id="GO:0042803">
    <property type="term" value="F:protein homodimerization activity"/>
    <property type="evidence" value="ECO:0000353"/>
    <property type="project" value="UniProtKB"/>
</dbReference>
<dbReference type="GO" id="GO:0006325">
    <property type="term" value="P:chromatin organization"/>
    <property type="evidence" value="ECO:0000314"/>
    <property type="project" value="UniProtKB"/>
</dbReference>
<dbReference type="GO" id="GO:0051276">
    <property type="term" value="P:chromosome organization"/>
    <property type="evidence" value="ECO:0000318"/>
    <property type="project" value="GO_Central"/>
</dbReference>
<dbReference type="GO" id="GO:0015074">
    <property type="term" value="P:DNA integration"/>
    <property type="evidence" value="ECO:0007669"/>
    <property type="project" value="Ensembl"/>
</dbReference>
<dbReference type="GO" id="GO:0007084">
    <property type="term" value="P:mitotic nuclear membrane reassembly"/>
    <property type="evidence" value="ECO:0000314"/>
    <property type="project" value="UniProtKB"/>
</dbReference>
<dbReference type="GO" id="GO:0160049">
    <property type="term" value="P:negative regulation of cGAS/STING signaling pathway"/>
    <property type="evidence" value="ECO:0000314"/>
    <property type="project" value="UniProt"/>
</dbReference>
<dbReference type="GO" id="GO:0045824">
    <property type="term" value="P:negative regulation of innate immune response"/>
    <property type="evidence" value="ECO:0000314"/>
    <property type="project" value="UniProtKB"/>
</dbReference>
<dbReference type="GO" id="GO:0010836">
    <property type="term" value="P:negative regulation of protein ADP-ribosylation"/>
    <property type="evidence" value="ECO:0000314"/>
    <property type="project" value="UniProtKB"/>
</dbReference>
<dbReference type="GO" id="GO:0032480">
    <property type="term" value="P:negative regulation of type I interferon production"/>
    <property type="evidence" value="ECO:0000314"/>
    <property type="project" value="UniProtKB"/>
</dbReference>
<dbReference type="GO" id="GO:0045071">
    <property type="term" value="P:negative regulation of viral genome replication"/>
    <property type="evidence" value="ECO:0000314"/>
    <property type="project" value="UniProtKB"/>
</dbReference>
<dbReference type="GO" id="GO:0006979">
    <property type="term" value="P:response to oxidative stress"/>
    <property type="evidence" value="ECO:0000314"/>
    <property type="project" value="UniProtKB"/>
</dbReference>
<dbReference type="GO" id="GO:0009615">
    <property type="term" value="P:response to virus"/>
    <property type="evidence" value="ECO:0000304"/>
    <property type="project" value="ProtInc"/>
</dbReference>
<dbReference type="FunFam" id="1.10.150.40:FF:000001">
    <property type="entry name" value="Barrier-to-autointegration factor B"/>
    <property type="match status" value="1"/>
</dbReference>
<dbReference type="Gene3D" id="1.10.150.40">
    <property type="entry name" value="Barrier-to-autointegration factor, BAF"/>
    <property type="match status" value="1"/>
</dbReference>
<dbReference type="InterPro" id="IPR051387">
    <property type="entry name" value="BAF"/>
</dbReference>
<dbReference type="InterPro" id="IPR004122">
    <property type="entry name" value="BAF_prot"/>
</dbReference>
<dbReference type="InterPro" id="IPR036617">
    <property type="entry name" value="BAF_sf"/>
</dbReference>
<dbReference type="PANTHER" id="PTHR47507">
    <property type="entry name" value="BARRIER TO AUTOINTEGRATION FACTOR 2"/>
    <property type="match status" value="1"/>
</dbReference>
<dbReference type="PANTHER" id="PTHR47507:SF7">
    <property type="entry name" value="BARRIER-TO-AUTOINTEGRATION FACTOR"/>
    <property type="match status" value="1"/>
</dbReference>
<dbReference type="Pfam" id="PF02961">
    <property type="entry name" value="SAM_BAF"/>
    <property type="match status" value="1"/>
</dbReference>
<dbReference type="SMART" id="SM01023">
    <property type="entry name" value="BAF"/>
    <property type="match status" value="1"/>
</dbReference>
<dbReference type="SUPFAM" id="SSF47798">
    <property type="entry name" value="Barrier-to-autointegration factor, BAF"/>
    <property type="match status" value="1"/>
</dbReference>
<sequence>MTTSQKHRDFVAEPMGEKPVGSLAGIGEVLGKKLEERGFDKAYVVLGQFLVLKKDEDLFREWLKDTCGANAKQSRDCFGCLREWCDAFL</sequence>
<gene>
    <name evidence="26 30" type="primary">BANF1</name>
    <name evidence="27" type="synonym">BAF</name>
    <name evidence="28" type="synonym">BCRG1</name>
</gene>